<accession>Q47VG7</accession>
<name>NTPPA_COLP3</name>
<keyword id="KW-0963">Cytoplasm</keyword>
<keyword id="KW-0378">Hydrolase</keyword>
<keyword id="KW-0546">Nucleotide metabolism</keyword>
<proteinExistence type="inferred from homology"/>
<reference key="1">
    <citation type="journal article" date="2005" name="Proc. Natl. Acad. Sci. U.S.A.">
        <title>The psychrophilic lifestyle as revealed by the genome sequence of Colwellia psychrerythraea 34H through genomic and proteomic analyses.</title>
        <authorList>
            <person name="Methe B.A."/>
            <person name="Nelson K.E."/>
            <person name="Deming J.W."/>
            <person name="Momen B."/>
            <person name="Melamud E."/>
            <person name="Zhang X."/>
            <person name="Moult J."/>
            <person name="Madupu R."/>
            <person name="Nelson W.C."/>
            <person name="Dodson R.J."/>
            <person name="Brinkac L.M."/>
            <person name="Daugherty S.C."/>
            <person name="Durkin A.S."/>
            <person name="DeBoy R.T."/>
            <person name="Kolonay J.F."/>
            <person name="Sullivan S.A."/>
            <person name="Zhou L."/>
            <person name="Davidsen T.M."/>
            <person name="Wu M."/>
            <person name="Huston A.L."/>
            <person name="Lewis M."/>
            <person name="Weaver B."/>
            <person name="Weidman J.F."/>
            <person name="Khouri H."/>
            <person name="Utterback T.R."/>
            <person name="Feldblyum T.V."/>
            <person name="Fraser C.M."/>
        </authorList>
    </citation>
    <scope>NUCLEOTIDE SEQUENCE [LARGE SCALE GENOMIC DNA]</scope>
    <source>
        <strain>34H / ATCC BAA-681</strain>
    </source>
</reference>
<evidence type="ECO:0000255" key="1">
    <source>
        <dbReference type="HAMAP-Rule" id="MF_00528"/>
    </source>
</evidence>
<organism>
    <name type="scientific">Colwellia psychrerythraea (strain 34H / ATCC BAA-681)</name>
    <name type="common">Vibrio psychroerythus</name>
    <dbReference type="NCBI Taxonomy" id="167879"/>
    <lineage>
        <taxon>Bacteria</taxon>
        <taxon>Pseudomonadati</taxon>
        <taxon>Pseudomonadota</taxon>
        <taxon>Gammaproteobacteria</taxon>
        <taxon>Alteromonadales</taxon>
        <taxon>Colwelliaceae</taxon>
        <taxon>Colwellia</taxon>
    </lineage>
</organism>
<protein>
    <recommendedName>
        <fullName evidence="1">dTTP/UTP pyrophosphatase</fullName>
        <shortName evidence="1">dTTPase/UTPase</shortName>
        <ecNumber evidence="1">3.6.1.9</ecNumber>
    </recommendedName>
    <alternativeName>
        <fullName evidence="1">Nucleoside triphosphate pyrophosphatase</fullName>
    </alternativeName>
    <alternativeName>
        <fullName evidence="1">Nucleotide pyrophosphatase</fullName>
        <shortName evidence="1">Nucleotide PPase</shortName>
    </alternativeName>
</protein>
<gene>
    <name type="ordered locus">CPS_4557</name>
</gene>
<comment type="function">
    <text evidence="1">Nucleoside triphosphate pyrophosphatase that hydrolyzes dTTP and UTP. May have a dual role in cell division arrest and in preventing the incorporation of modified nucleotides into cellular nucleic acids.</text>
</comment>
<comment type="catalytic activity">
    <reaction evidence="1">
        <text>dTTP + H2O = dTMP + diphosphate + H(+)</text>
        <dbReference type="Rhea" id="RHEA:28534"/>
        <dbReference type="ChEBI" id="CHEBI:15377"/>
        <dbReference type="ChEBI" id="CHEBI:15378"/>
        <dbReference type="ChEBI" id="CHEBI:33019"/>
        <dbReference type="ChEBI" id="CHEBI:37568"/>
        <dbReference type="ChEBI" id="CHEBI:63528"/>
        <dbReference type="EC" id="3.6.1.9"/>
    </reaction>
</comment>
<comment type="catalytic activity">
    <reaction evidence="1">
        <text>UTP + H2O = UMP + diphosphate + H(+)</text>
        <dbReference type="Rhea" id="RHEA:29395"/>
        <dbReference type="ChEBI" id="CHEBI:15377"/>
        <dbReference type="ChEBI" id="CHEBI:15378"/>
        <dbReference type="ChEBI" id="CHEBI:33019"/>
        <dbReference type="ChEBI" id="CHEBI:46398"/>
        <dbReference type="ChEBI" id="CHEBI:57865"/>
        <dbReference type="EC" id="3.6.1.9"/>
    </reaction>
</comment>
<comment type="cofactor">
    <cofactor evidence="1">
        <name>a divalent metal cation</name>
        <dbReference type="ChEBI" id="CHEBI:60240"/>
    </cofactor>
</comment>
<comment type="subcellular location">
    <subcellularLocation>
        <location evidence="1">Cytoplasm</location>
    </subcellularLocation>
</comment>
<comment type="similarity">
    <text evidence="1">Belongs to the Maf family. YhdE subfamily.</text>
</comment>
<dbReference type="EC" id="3.6.1.9" evidence="1"/>
<dbReference type="EMBL" id="CP000083">
    <property type="protein sequence ID" value="AAZ28629.1"/>
    <property type="molecule type" value="Genomic_DNA"/>
</dbReference>
<dbReference type="RefSeq" id="WP_011045286.1">
    <property type="nucleotide sequence ID" value="NC_003910.7"/>
</dbReference>
<dbReference type="SMR" id="Q47VG7"/>
<dbReference type="STRING" id="167879.CPS_4557"/>
<dbReference type="KEGG" id="cps:CPS_4557"/>
<dbReference type="HOGENOM" id="CLU_040416_2_1_6"/>
<dbReference type="Proteomes" id="UP000000547">
    <property type="component" value="Chromosome"/>
</dbReference>
<dbReference type="GO" id="GO:0005737">
    <property type="term" value="C:cytoplasm"/>
    <property type="evidence" value="ECO:0007669"/>
    <property type="project" value="UniProtKB-SubCell"/>
</dbReference>
<dbReference type="GO" id="GO:0036218">
    <property type="term" value="F:dTTP diphosphatase activity"/>
    <property type="evidence" value="ECO:0007669"/>
    <property type="project" value="RHEA"/>
</dbReference>
<dbReference type="GO" id="GO:0036221">
    <property type="term" value="F:UTP diphosphatase activity"/>
    <property type="evidence" value="ECO:0007669"/>
    <property type="project" value="RHEA"/>
</dbReference>
<dbReference type="GO" id="GO:0009117">
    <property type="term" value="P:nucleotide metabolic process"/>
    <property type="evidence" value="ECO:0007669"/>
    <property type="project" value="UniProtKB-KW"/>
</dbReference>
<dbReference type="CDD" id="cd00555">
    <property type="entry name" value="Maf"/>
    <property type="match status" value="1"/>
</dbReference>
<dbReference type="Gene3D" id="3.90.950.10">
    <property type="match status" value="1"/>
</dbReference>
<dbReference type="HAMAP" id="MF_00528">
    <property type="entry name" value="Maf"/>
    <property type="match status" value="1"/>
</dbReference>
<dbReference type="InterPro" id="IPR029001">
    <property type="entry name" value="ITPase-like_fam"/>
</dbReference>
<dbReference type="InterPro" id="IPR003697">
    <property type="entry name" value="Maf-like"/>
</dbReference>
<dbReference type="NCBIfam" id="TIGR00172">
    <property type="entry name" value="maf"/>
    <property type="match status" value="1"/>
</dbReference>
<dbReference type="PANTHER" id="PTHR43213">
    <property type="entry name" value="BIFUNCTIONAL DTTP/UTP PYROPHOSPHATASE/METHYLTRANSFERASE PROTEIN-RELATED"/>
    <property type="match status" value="1"/>
</dbReference>
<dbReference type="PANTHER" id="PTHR43213:SF5">
    <property type="entry name" value="BIFUNCTIONAL DTTP_UTP PYROPHOSPHATASE_METHYLTRANSFERASE PROTEIN-RELATED"/>
    <property type="match status" value="1"/>
</dbReference>
<dbReference type="Pfam" id="PF02545">
    <property type="entry name" value="Maf"/>
    <property type="match status" value="1"/>
</dbReference>
<dbReference type="PIRSF" id="PIRSF006305">
    <property type="entry name" value="Maf"/>
    <property type="match status" value="1"/>
</dbReference>
<dbReference type="SUPFAM" id="SSF52972">
    <property type="entry name" value="ITPase-like"/>
    <property type="match status" value="1"/>
</dbReference>
<feature type="chain" id="PRO_0000267289" description="dTTP/UTP pyrophosphatase">
    <location>
        <begin position="1"/>
        <end position="212"/>
    </location>
</feature>
<feature type="active site" description="Proton acceptor" evidence="1">
    <location>
        <position position="88"/>
    </location>
</feature>
<feature type="site" description="Important for substrate specificity" evidence="1">
    <location>
        <position position="26"/>
    </location>
</feature>
<feature type="site" description="Important for substrate specificity" evidence="1">
    <location>
        <position position="89"/>
    </location>
</feature>
<feature type="site" description="Important for substrate specificity" evidence="1">
    <location>
        <position position="171"/>
    </location>
</feature>
<sequence>MIFMTNEIVNSTSTSQKLILASQSPRRRELLAQLGYQFSVQASDIDETVEKAETAYDYVLRLAKQKAQHVLDLLPEAERVYSYVLGSDTSVVFNGEILGKPDNEENCIDTLSLLSGNQHQVLTAIALVSHAGVKGQVITTEVTFKTLTKAEISAYWLTGEPQDKAGSYGIQGIAGQFVKTINGSYSAVVGLPLYETAQLLANAGFVGSIHTK</sequence>